<accession>Q4WAZ4</accession>
<comment type="function">
    <text evidence="6 9 14">Stereoselective keto-reductase; part of the gene cluster that mediates the biosynthesis of fumagillin, a meroterpenoid that has numerous biological activities including irreversible inhibition of human type 2 methionine aminopeptidase (METAP2) (PubMed:23488861, PubMed:24568283). Within the pathway, the keto-reductase af490 acts as a 5-dehydrofumagillol 5-reductase that stereoselectively reduces 5-keto-fumagillol to 5R-hydroxy-seco-sesquiterpene (PubMed:24568283). The pathway begins with the conversion of farnesyl pyrophosphate (FPP) to beta-trans-bergamotene by the membrane-bound beta-trans-bergamotene synthase af520. The multifunctional cytochrome P450 monooxygenase af510 then converts beta-trans-bergamotene into 5-keto-demethoxyfumagillol via several oxydation steps. 5-keto-demethoxyfumagillol is then subjected to successive C-6 hydroxylation and O-methylation by the dioxygenase af480 and O-methyltransferase af390-400, respectively, to yield 5-keto-fumagillol, which is then stereoselectively reduced by the keto-reductase af490 to 5R-hydroxy-seco-sesquiterpene. The next step is the polyketide transferase af380-catalyzed transfer of a dodecapentaenoyl group synthesized by the polyketide synthase af370 onto 5R-hydroxy-seco-sesquiterpene which leads to the production of prefumagillin. Finally, oxidative cleavage by the monooxygenase af470 converts prefumagillin to fumagillin (Probable) (PubMed:24568283).</text>
</comment>
<comment type="catalytic activity">
    <reaction evidence="14">
        <text>fumagillol + NADP(+) = 5-dehydrofumagillol + NADPH + H(+)</text>
        <dbReference type="Rhea" id="RHEA:74707"/>
        <dbReference type="ChEBI" id="CHEBI:15378"/>
        <dbReference type="ChEBI" id="CHEBI:57783"/>
        <dbReference type="ChEBI" id="CHEBI:58349"/>
        <dbReference type="ChEBI" id="CHEBI:193165"/>
        <dbReference type="ChEBI" id="CHEBI:324935"/>
        <dbReference type="EC" id="1.1.1.437"/>
    </reaction>
    <physiologicalReaction direction="left-to-right" evidence="14">
        <dbReference type="Rhea" id="RHEA:74708"/>
    </physiologicalReaction>
</comment>
<comment type="pathway">
    <text evidence="9">Secondary metabolite biosynthesis; terpenoid biosynthesis.</text>
</comment>
<comment type="induction">
    <text evidence="7 8">Expression is controlled by the fumagillin biosynthesis cluster regulator fumR (PubMed:24082142). Expression is also under the control of the developmental and secondary metabolism regulator veA (PubMed:24116213).</text>
</comment>
<comment type="disruption phenotype">
    <text evidence="9">Strongly decreases the production of fumagillin (PubMed:24568283).</text>
</comment>
<comment type="biotechnology">
    <text evidence="3 4 5 10">Fumagillin and its derivatives have been intensely studied for their potential use in the treatment of amebiasis, microsporidiosis and rheumatoid arthritis (PubMed:12075057, PubMed:14913169, PubMed:18209961). They have also interesting antiangiogenic properties by the irreversible inhibition of human type 2 methionine aminopeptidase (METAP2) (PubMed:9177176).</text>
</comment>
<comment type="caution">
    <text evidence="6 9">Was first identified as a pseudogene since it seemed to be altered polyketide synthase with only the dehydratase (DH) and ketoreductase (KR) domains remaining (PubMed:23488861). Further study showed it encoded indeed for a functional keto-reductase involved in fumagillin biosynthesis (PubMed:24568283).</text>
</comment>
<name>FMAH_ASPFU</name>
<organism>
    <name type="scientific">Aspergillus fumigatus (strain ATCC MYA-4609 / CBS 101355 / FGSC A1100 / Af293)</name>
    <name type="common">Neosartorya fumigata</name>
    <dbReference type="NCBI Taxonomy" id="330879"/>
    <lineage>
        <taxon>Eukaryota</taxon>
        <taxon>Fungi</taxon>
        <taxon>Dikarya</taxon>
        <taxon>Ascomycota</taxon>
        <taxon>Pezizomycotina</taxon>
        <taxon>Eurotiomycetes</taxon>
        <taxon>Eurotiomycetidae</taxon>
        <taxon>Eurotiales</taxon>
        <taxon>Aspergillaceae</taxon>
        <taxon>Aspergillus</taxon>
        <taxon>Aspergillus subgen. Fumigati</taxon>
    </lineage>
</organism>
<sequence length="1017" mass="110955">MLGLPNELSGSQVPGATEYEPGWRRVFKVEDLPGLGDYHIDNQTAVPTSIVCVIALAAAMDISNGKQANSIELYDVTIGRPIHLGTSPVEIETMIAIEPGKDGADSIQAEFSLNKSAGHDENPVSVANGRLRMTFAGHELELLSSRQAKPCGLRPVSISPFYDSLREVGLGYSGPFRALTSAERRMDYACGVIAPTTGEASRTPALLHPAMLEACFQTLLLAFAAPRDGSLWTIFVPTQIGRLTIFPNSSVGINTPASVTIDTHLHEFTAGHKADLPMIKGDVSVYSSEAGQLRIRLEGLTMSPIAPSTEKQDKRLYLKRTWLPDILSGPVLERGKPVFCYELFGLSLAPKSILAATRLLSHRYAKLKILQVGTSSVHLVHSLCRELGSSMDSYTIACESDSSMEDMRRRLLSDALPIKYVVLDIGKSLTEGDEPAAGEPTDLGSFDLIILLKASADDSPILKRTRGLIKPGGFLLMTVAATEAIPWEARDMTRKAIHDTLQSVGFSGVDLLQRDPEGDSSFVILSQAVDHQIRFLRAPFDSTPPFPTRGTLLVIGGASHRAKRPIETIQNSLRRVWAGEIVLIRSLTDLQTRGLDHVEAVLSLTELDQSVLENLSRDTFDGLHRLLHQSKIVLWVTYSAGNLNPHQSGAIGLVRAVQAETPDKVLQLLDVDQIDGNDGLVAESFLRLIGGVKMKDGSSNSLWTVEPELSVQGGRLLIPRVLFDKKRNDRLNCLRRQLKATDSFEKQSALARPIDPCSLFSPNKTYVLAGLSGQMGQSITRWIVQSGGRHIVITSRNPDKDDLWTKELEQRGAHIEIMAADVTKKQEMINVRNQILSAMPPIGGVANGAMLQSNCFFSDLTYEALQDVLKPKVDGSLVLDEVFSSDDLDFFLLFSSISAVVGQPFQANYDAANNFMTGLVLQRRARNLPASVINLGPIIGLGFIQNIDSGGGSEAVIATLRSLDYMLVSERELHHILAEAILIGKSDETPEIITGLETVSDNPAPFWHKSLLFSHII</sequence>
<protein>
    <recommendedName>
        <fullName evidence="12">Stereoselective keto-reductase af490</fullName>
        <ecNumber evidence="14">1.1.1.437</ecNumber>
    </recommendedName>
    <alternativeName>
        <fullName evidence="13">5-dehydrofumagillol 5-reductase</fullName>
    </alternativeName>
    <alternativeName>
        <fullName evidence="12">Fumagillin biosynthesis cluster keto-reductase</fullName>
        <shortName evidence="12">Fma-KR</shortName>
    </alternativeName>
</protein>
<keyword id="KW-0560">Oxidoreductase</keyword>
<keyword id="KW-1185">Reference proteome</keyword>
<feature type="chain" id="PRO_0000437042" description="Stereoselective keto-reductase af490">
    <location>
        <begin position="1"/>
        <end position="1017"/>
    </location>
</feature>
<feature type="domain" description="PKS/mFAS DH" evidence="2">
    <location>
        <begin position="6"/>
        <end position="311"/>
    </location>
</feature>
<feature type="region of interest" description="N-terminal hotdog fold" evidence="2">
    <location>
        <begin position="6"/>
        <end position="138"/>
    </location>
</feature>
<feature type="region of interest" description="Dehydratase (DH)" evidence="1">
    <location>
        <begin position="8"/>
        <end position="306"/>
    </location>
</feature>
<feature type="region of interest" description="C-terminal hotdog fold" evidence="2">
    <location>
        <begin position="153"/>
        <end position="311"/>
    </location>
</feature>
<feature type="region of interest" description="Ketoreductase (KR)" evidence="1">
    <location>
        <begin position="532"/>
        <end position="720"/>
    </location>
</feature>
<proteinExistence type="evidence at protein level"/>
<evidence type="ECO:0000255" key="1"/>
<evidence type="ECO:0000255" key="2">
    <source>
        <dbReference type="PROSITE-ProRule" id="PRU01363"/>
    </source>
</evidence>
<evidence type="ECO:0000269" key="3">
    <source>
    </source>
</evidence>
<evidence type="ECO:0000269" key="4">
    <source>
    </source>
</evidence>
<evidence type="ECO:0000269" key="5">
    <source>
    </source>
</evidence>
<evidence type="ECO:0000269" key="6">
    <source>
    </source>
</evidence>
<evidence type="ECO:0000269" key="7">
    <source>
    </source>
</evidence>
<evidence type="ECO:0000269" key="8">
    <source>
    </source>
</evidence>
<evidence type="ECO:0000269" key="9">
    <source>
    </source>
</evidence>
<evidence type="ECO:0000269" key="10">
    <source>
    </source>
</evidence>
<evidence type="ECO:0000303" key="11">
    <source>
    </source>
</evidence>
<evidence type="ECO:0000303" key="12">
    <source>
    </source>
</evidence>
<evidence type="ECO:0000305" key="13"/>
<evidence type="ECO:0000305" key="14">
    <source>
    </source>
</evidence>
<reference key="1">
    <citation type="journal article" date="2005" name="Nature">
        <title>Genomic sequence of the pathogenic and allergenic filamentous fungus Aspergillus fumigatus.</title>
        <authorList>
            <person name="Nierman W.C."/>
            <person name="Pain A."/>
            <person name="Anderson M.J."/>
            <person name="Wortman J.R."/>
            <person name="Kim H.S."/>
            <person name="Arroyo J."/>
            <person name="Berriman M."/>
            <person name="Abe K."/>
            <person name="Archer D.B."/>
            <person name="Bermejo C."/>
            <person name="Bennett J.W."/>
            <person name="Bowyer P."/>
            <person name="Chen D."/>
            <person name="Collins M."/>
            <person name="Coulsen R."/>
            <person name="Davies R."/>
            <person name="Dyer P.S."/>
            <person name="Farman M.L."/>
            <person name="Fedorova N."/>
            <person name="Fedorova N.D."/>
            <person name="Feldblyum T.V."/>
            <person name="Fischer R."/>
            <person name="Fosker N."/>
            <person name="Fraser A."/>
            <person name="Garcia J.L."/>
            <person name="Garcia M.J."/>
            <person name="Goble A."/>
            <person name="Goldman G.H."/>
            <person name="Gomi K."/>
            <person name="Griffith-Jones S."/>
            <person name="Gwilliam R."/>
            <person name="Haas B.J."/>
            <person name="Haas H."/>
            <person name="Harris D.E."/>
            <person name="Horiuchi H."/>
            <person name="Huang J."/>
            <person name="Humphray S."/>
            <person name="Jimenez J."/>
            <person name="Keller N."/>
            <person name="Khouri H."/>
            <person name="Kitamoto K."/>
            <person name="Kobayashi T."/>
            <person name="Konzack S."/>
            <person name="Kulkarni R."/>
            <person name="Kumagai T."/>
            <person name="Lafton A."/>
            <person name="Latge J.-P."/>
            <person name="Li W."/>
            <person name="Lord A."/>
            <person name="Lu C."/>
            <person name="Majoros W.H."/>
            <person name="May G.S."/>
            <person name="Miller B.L."/>
            <person name="Mohamoud Y."/>
            <person name="Molina M."/>
            <person name="Monod M."/>
            <person name="Mouyna I."/>
            <person name="Mulligan S."/>
            <person name="Murphy L.D."/>
            <person name="O'Neil S."/>
            <person name="Paulsen I."/>
            <person name="Penalva M.A."/>
            <person name="Pertea M."/>
            <person name="Price C."/>
            <person name="Pritchard B.L."/>
            <person name="Quail M.A."/>
            <person name="Rabbinowitsch E."/>
            <person name="Rawlins N."/>
            <person name="Rajandream M.A."/>
            <person name="Reichard U."/>
            <person name="Renauld H."/>
            <person name="Robson G.D."/>
            <person name="Rodriguez de Cordoba S."/>
            <person name="Rodriguez-Pena J.M."/>
            <person name="Ronning C.M."/>
            <person name="Rutter S."/>
            <person name="Salzberg S.L."/>
            <person name="Sanchez M."/>
            <person name="Sanchez-Ferrero J.C."/>
            <person name="Saunders D."/>
            <person name="Seeger K."/>
            <person name="Squares R."/>
            <person name="Squares S."/>
            <person name="Takeuchi M."/>
            <person name="Tekaia F."/>
            <person name="Turner G."/>
            <person name="Vazquez de Aldana C.R."/>
            <person name="Weidman J."/>
            <person name="White O."/>
            <person name="Woodward J.R."/>
            <person name="Yu J.-H."/>
            <person name="Fraser C.M."/>
            <person name="Galagan J.E."/>
            <person name="Asai K."/>
            <person name="Machida M."/>
            <person name="Hall N."/>
            <person name="Barrell B.G."/>
            <person name="Denning D.W."/>
        </authorList>
    </citation>
    <scope>NUCLEOTIDE SEQUENCE [LARGE SCALE GENOMIC DNA]</scope>
    <source>
        <strain>ATCC MYA-4609 / CBS 101355 / FGSC A1100 / Af293</strain>
    </source>
</reference>
<reference key="2">
    <citation type="journal article" date="1952" name="Science">
        <title>The treatment of amebiasis with fumagillin.</title>
        <authorList>
            <person name="Killough J.H."/>
            <person name="Magill G.B."/>
            <person name="Smith R.C."/>
        </authorList>
    </citation>
    <scope>BIOTECHNOLOGY</scope>
</reference>
<reference key="3">
    <citation type="journal article" date="1997" name="Proc. Natl. Acad. Sci. U.S.A.">
        <title>The anti-angiogenic agent fumagillin covalently binds and inhibits the methionine aminopeptidase, MetAP-2.</title>
        <authorList>
            <person name="Sin N."/>
            <person name="Meng L."/>
            <person name="Wang M.Q."/>
            <person name="Wen J.J."/>
            <person name="Bornmann W.G."/>
            <person name="Crews C.M."/>
        </authorList>
    </citation>
    <scope>BIOTECHNOLOGY</scope>
</reference>
<reference key="4">
    <citation type="journal article" date="2002" name="N. Engl. J. Med.">
        <title>Fumagillin treatment of intestinal microsporidiosis.</title>
        <authorList>
            <consortium name="Agence Nationale de Recherches sur le SIDA 090 Study Group"/>
            <person name="Molina J.M."/>
            <person name="Tourneur M."/>
            <person name="Sarfati C."/>
            <person name="Chevret S."/>
            <person name="de Gouvello A."/>
            <person name="Gobert J.G."/>
            <person name="Balkan S."/>
            <person name="Derouin F."/>
        </authorList>
    </citation>
    <scope>BIOTECHNOLOGY</scope>
</reference>
<reference key="5">
    <citation type="journal article" date="2008" name="Inflamm. Res.">
        <title>An inhibitor of methionine aminopeptidase type-2, PPI-2458, ameliorates the pathophysiological disease processes of rheumatoid arthritis.</title>
        <authorList>
            <person name="Lazarus D.D."/>
            <person name="Doyle E.G."/>
            <person name="Bernier S.G."/>
            <person name="Rogers A.B."/>
            <person name="Labenski M.T."/>
            <person name="Wakefield J.D."/>
            <person name="Karp R.M."/>
            <person name="Clark E.J."/>
            <person name="Lorusso J."/>
            <person name="Hoyt J.G."/>
            <person name="Thompson C.D."/>
            <person name="Hannig G."/>
            <person name="Westlin W.F."/>
        </authorList>
    </citation>
    <scope>BIOTECHNOLOGY</scope>
</reference>
<reference key="6">
    <citation type="journal article" date="2013" name="J. Am. Chem. Soc.">
        <title>The fumagillin biosynthetic gene cluster in Aspergillus fumigatus encodes a cryptic terpene cyclase involved in the formation of beta-trans-bergamotene.</title>
        <authorList>
            <person name="Lin H.C."/>
            <person name="Chooi Y.H."/>
            <person name="Dhingra S."/>
            <person name="Xu W."/>
            <person name="Calvo A.M."/>
            <person name="Tang Y."/>
        </authorList>
    </citation>
    <scope>FUNCTION</scope>
</reference>
<reference key="7">
    <citation type="journal article" date="2013" name="PLoS ONE">
        <title>The fumagillin gene cluster, an example of hundreds of genes under veA control in Aspergillus fumigatus.</title>
        <authorList>
            <person name="Dhingra S."/>
            <person name="Lind A.L."/>
            <person name="Lin H.C."/>
            <person name="Tang Y."/>
            <person name="Rokas A."/>
            <person name="Calvo A.M."/>
        </authorList>
    </citation>
    <scope>INDUCTION</scope>
</reference>
<reference key="8">
    <citation type="journal article" date="2013" name="Proc. Natl. Acad. Sci. U.S.A.">
        <title>Prototype of an intertwined secondary-metabolite supercluster.</title>
        <authorList>
            <person name="Wiemann P."/>
            <person name="Guo C.J."/>
            <person name="Palmer J.M."/>
            <person name="Sekonyela R."/>
            <person name="Wang C.C."/>
            <person name="Keller N.P."/>
        </authorList>
    </citation>
    <scope>IDENTIFICATION</scope>
    <scope>INDUCTION</scope>
</reference>
<reference key="9">
    <citation type="journal article" date="2014" name="J. Am. Chem. Soc.">
        <title>Generation of complexity in fungal terpene biosynthesis: discovery of a multifunctional cytochrome P450 in the fumagillin pathway.</title>
        <authorList>
            <person name="Lin H.C."/>
            <person name="Tsunematsu Y."/>
            <person name="Dhingra S."/>
            <person name="Xu W."/>
            <person name="Fukutomi M."/>
            <person name="Chooi Y.H."/>
            <person name="Cane D.E."/>
            <person name="Calvo A.M."/>
            <person name="Watanabe K."/>
            <person name="Tang Y."/>
        </authorList>
    </citation>
    <scope>FUNCTION</scope>
    <scope>DISRUPTION PHENOTYPE</scope>
</reference>
<dbReference type="EC" id="1.1.1.437" evidence="14"/>
<dbReference type="EMBL" id="AAHF01000014">
    <property type="protein sequence ID" value="EAL85118.1"/>
    <property type="molecule type" value="Genomic_DNA"/>
</dbReference>
<dbReference type="RefSeq" id="XP_747156.1">
    <property type="nucleotide sequence ID" value="XM_742063.1"/>
</dbReference>
<dbReference type="SMR" id="Q4WAZ4"/>
<dbReference type="STRING" id="330879.Q4WAZ4"/>
<dbReference type="EnsemblFungi" id="EAL85118">
    <property type="protein sequence ID" value="EAL85118"/>
    <property type="gene ID" value="AFUA_8G00490"/>
</dbReference>
<dbReference type="GeneID" id="3504544"/>
<dbReference type="KEGG" id="afm:AFUA_8G00490"/>
<dbReference type="eggNOG" id="KOG1202">
    <property type="taxonomic scope" value="Eukaryota"/>
</dbReference>
<dbReference type="HOGENOM" id="CLU_296646_0_0_1"/>
<dbReference type="InParanoid" id="Q4WAZ4"/>
<dbReference type="OMA" id="QSITRWI"/>
<dbReference type="OrthoDB" id="329835at2759"/>
<dbReference type="BioCyc" id="MetaCyc:MONOMER-124256"/>
<dbReference type="UniPathway" id="UPA00213"/>
<dbReference type="Proteomes" id="UP000002530">
    <property type="component" value="Chromosome 8"/>
</dbReference>
<dbReference type="GO" id="GO:0004312">
    <property type="term" value="F:fatty acid synthase activity"/>
    <property type="evidence" value="ECO:0000318"/>
    <property type="project" value="GO_Central"/>
</dbReference>
<dbReference type="GO" id="GO:0016491">
    <property type="term" value="F:oxidoreductase activity"/>
    <property type="evidence" value="ECO:0007669"/>
    <property type="project" value="UniProtKB-KW"/>
</dbReference>
<dbReference type="GO" id="GO:0006633">
    <property type="term" value="P:fatty acid biosynthetic process"/>
    <property type="evidence" value="ECO:0000318"/>
    <property type="project" value="GO_Central"/>
</dbReference>
<dbReference type="GO" id="GO:0044550">
    <property type="term" value="P:secondary metabolite biosynthetic process"/>
    <property type="evidence" value="ECO:0000318"/>
    <property type="project" value="GO_Central"/>
</dbReference>
<dbReference type="GO" id="GO:0016114">
    <property type="term" value="P:terpenoid biosynthetic process"/>
    <property type="evidence" value="ECO:0007669"/>
    <property type="project" value="UniProtKB-UniPathway"/>
</dbReference>
<dbReference type="CDD" id="cd05274">
    <property type="entry name" value="KR_FAS_SDR_x"/>
    <property type="match status" value="1"/>
</dbReference>
<dbReference type="Gene3D" id="3.40.50.720">
    <property type="entry name" value="NAD(P)-binding Rossmann-like Domain"/>
    <property type="match status" value="1"/>
</dbReference>
<dbReference type="Gene3D" id="3.10.129.110">
    <property type="entry name" value="Polyketide synthase dehydratase"/>
    <property type="match status" value="1"/>
</dbReference>
<dbReference type="Gene3D" id="3.40.50.150">
    <property type="entry name" value="Vaccinia Virus protein VP39"/>
    <property type="match status" value="1"/>
</dbReference>
<dbReference type="InterPro" id="IPR036291">
    <property type="entry name" value="NAD(P)-bd_dom_sf"/>
</dbReference>
<dbReference type="InterPro" id="IPR042104">
    <property type="entry name" value="PKS_dehydratase_sf"/>
</dbReference>
<dbReference type="InterPro" id="IPR020807">
    <property type="entry name" value="PKS_DH"/>
</dbReference>
<dbReference type="InterPro" id="IPR049551">
    <property type="entry name" value="PKS_DH_C"/>
</dbReference>
<dbReference type="InterPro" id="IPR049552">
    <property type="entry name" value="PKS_DH_N"/>
</dbReference>
<dbReference type="InterPro" id="IPR013968">
    <property type="entry name" value="PKS_KR"/>
</dbReference>
<dbReference type="InterPro" id="IPR049900">
    <property type="entry name" value="PKS_mFAS_DH"/>
</dbReference>
<dbReference type="InterPro" id="IPR050091">
    <property type="entry name" value="PKS_NRPS_Biosynth_Enz"/>
</dbReference>
<dbReference type="InterPro" id="IPR029063">
    <property type="entry name" value="SAM-dependent_MTases_sf"/>
</dbReference>
<dbReference type="PANTHER" id="PTHR43775">
    <property type="entry name" value="FATTY ACID SYNTHASE"/>
    <property type="match status" value="1"/>
</dbReference>
<dbReference type="PANTHER" id="PTHR43775:SF52">
    <property type="entry name" value="STEREOSELECTIVE KETO-REDUCTASE AF490"/>
    <property type="match status" value="1"/>
</dbReference>
<dbReference type="Pfam" id="PF08659">
    <property type="entry name" value="KR"/>
    <property type="match status" value="1"/>
</dbReference>
<dbReference type="Pfam" id="PF21089">
    <property type="entry name" value="PKS_DH_N"/>
    <property type="match status" value="1"/>
</dbReference>
<dbReference type="Pfam" id="PF14765">
    <property type="entry name" value="PS-DH"/>
    <property type="match status" value="1"/>
</dbReference>
<dbReference type="SMART" id="SM00826">
    <property type="entry name" value="PKS_DH"/>
    <property type="match status" value="1"/>
</dbReference>
<dbReference type="SMART" id="SM00822">
    <property type="entry name" value="PKS_KR"/>
    <property type="match status" value="1"/>
</dbReference>
<dbReference type="SUPFAM" id="SSF51735">
    <property type="entry name" value="NAD(P)-binding Rossmann-fold domains"/>
    <property type="match status" value="2"/>
</dbReference>
<dbReference type="SUPFAM" id="SSF53335">
    <property type="entry name" value="S-adenosyl-L-methionine-dependent methyltransferases"/>
    <property type="match status" value="1"/>
</dbReference>
<dbReference type="PROSITE" id="PS52019">
    <property type="entry name" value="PKS_MFAS_DH"/>
    <property type="match status" value="1"/>
</dbReference>
<gene>
    <name evidence="11" type="primary">af490</name>
    <name type="ORF">AFUA_8G00490</name>
</gene>